<organism>
    <name type="scientific">Arabidopsis thaliana</name>
    <name type="common">Mouse-ear cress</name>
    <dbReference type="NCBI Taxonomy" id="3702"/>
    <lineage>
        <taxon>Eukaryota</taxon>
        <taxon>Viridiplantae</taxon>
        <taxon>Streptophyta</taxon>
        <taxon>Embryophyta</taxon>
        <taxon>Tracheophyta</taxon>
        <taxon>Spermatophyta</taxon>
        <taxon>Magnoliopsida</taxon>
        <taxon>eudicotyledons</taxon>
        <taxon>Gunneridae</taxon>
        <taxon>Pentapetalae</taxon>
        <taxon>rosids</taxon>
        <taxon>malvids</taxon>
        <taxon>Brassicales</taxon>
        <taxon>Brassicaceae</taxon>
        <taxon>Camelineae</taxon>
        <taxon>Arabidopsis</taxon>
    </lineage>
</organism>
<name>SIGD_ARATH</name>
<reference key="1">
    <citation type="online journal article" date="1998" name="Plant Gene Register">
        <title>The cDNA sequence of AtSIG4, a new member of the nuclear-encoded sigma-like factor gene family in Arabidopsis thaliana.</title>
        <authorList>
            <person name="Yao J."/>
            <person name="Allison L.A."/>
        </authorList>
        <locator>PGR98-212</locator>
    </citation>
    <scope>NUCLEOTIDE SEQUENCE [MRNA] (ISOFORM 1)</scope>
    <scope>TISSUE SPECIFICITY</scope>
    <scope>INDUCTION BY LIGHT</scope>
</reference>
<reference key="2">
    <citation type="journal article" date="2000" name="FEBS Lett.">
        <title>Three new nuclear genes, sigD, sigE and sigF, encoding putative plastid RNA polymerase sigma factors in Arabidopsis thaliana.</title>
        <authorList>
            <person name="Fujiwara M."/>
            <person name="Nagashima A."/>
            <person name="Kanamaru K."/>
            <person name="Tanaka K."/>
            <person name="Takahashi H."/>
        </authorList>
    </citation>
    <scope>NUCLEOTIDE SEQUENCE [GENOMIC DNA] (ISOFORMS 1 AND 2)</scope>
    <source>
        <strain>cv. Columbia</strain>
    </source>
</reference>
<reference key="3">
    <citation type="journal article" date="1997" name="DNA Res.">
        <title>Structural analysis of Arabidopsis thaliana chromosome 5. II. Sequence features of the regions of 1,044,062 bp covered by thirteen physically assigned P1 clones.</title>
        <authorList>
            <person name="Kotani H."/>
            <person name="Nakamura Y."/>
            <person name="Sato S."/>
            <person name="Kaneko T."/>
            <person name="Asamizu E."/>
            <person name="Miyajima N."/>
            <person name="Tabata S."/>
        </authorList>
    </citation>
    <scope>NUCLEOTIDE SEQUENCE [LARGE SCALE GENOMIC DNA]</scope>
    <source>
        <strain>cv. Columbia</strain>
    </source>
</reference>
<reference key="4">
    <citation type="journal article" date="2017" name="Plant J.">
        <title>Araport11: a complete reannotation of the Arabidopsis thaliana reference genome.</title>
        <authorList>
            <person name="Cheng C.Y."/>
            <person name="Krishnakumar V."/>
            <person name="Chan A.P."/>
            <person name="Thibaud-Nissen F."/>
            <person name="Schobel S."/>
            <person name="Town C.D."/>
        </authorList>
    </citation>
    <scope>GENOME REANNOTATION</scope>
    <source>
        <strain>cv. Columbia</strain>
    </source>
</reference>
<reference key="5">
    <citation type="journal article" date="2003" name="Science">
        <title>Empirical analysis of transcriptional activity in the Arabidopsis genome.</title>
        <authorList>
            <person name="Yamada K."/>
            <person name="Lim J."/>
            <person name="Dale J.M."/>
            <person name="Chen H."/>
            <person name="Shinn P."/>
            <person name="Palm C.J."/>
            <person name="Southwick A.M."/>
            <person name="Wu H.C."/>
            <person name="Kim C.J."/>
            <person name="Nguyen M."/>
            <person name="Pham P.K."/>
            <person name="Cheuk R.F."/>
            <person name="Karlin-Newmann G."/>
            <person name="Liu S.X."/>
            <person name="Lam B."/>
            <person name="Sakano H."/>
            <person name="Wu T."/>
            <person name="Yu G."/>
            <person name="Miranda M."/>
            <person name="Quach H.L."/>
            <person name="Tripp M."/>
            <person name="Chang C.H."/>
            <person name="Lee J.M."/>
            <person name="Toriumi M.J."/>
            <person name="Chan M.M."/>
            <person name="Tang C.C."/>
            <person name="Onodera C.S."/>
            <person name="Deng J.M."/>
            <person name="Akiyama K."/>
            <person name="Ansari Y."/>
            <person name="Arakawa T."/>
            <person name="Banh J."/>
            <person name="Banno F."/>
            <person name="Bowser L."/>
            <person name="Brooks S.Y."/>
            <person name="Carninci P."/>
            <person name="Chao Q."/>
            <person name="Choy N."/>
            <person name="Enju A."/>
            <person name="Goldsmith A.D."/>
            <person name="Gurjal M."/>
            <person name="Hansen N.F."/>
            <person name="Hayashizaki Y."/>
            <person name="Johnson-Hopson C."/>
            <person name="Hsuan V.W."/>
            <person name="Iida K."/>
            <person name="Karnes M."/>
            <person name="Khan S."/>
            <person name="Koesema E."/>
            <person name="Ishida J."/>
            <person name="Jiang P.X."/>
            <person name="Jones T."/>
            <person name="Kawai J."/>
            <person name="Kamiya A."/>
            <person name="Meyers C."/>
            <person name="Nakajima M."/>
            <person name="Narusaka M."/>
            <person name="Seki M."/>
            <person name="Sakurai T."/>
            <person name="Satou M."/>
            <person name="Tamse R."/>
            <person name="Vaysberg M."/>
            <person name="Wallender E.K."/>
            <person name="Wong C."/>
            <person name="Yamamura Y."/>
            <person name="Yuan S."/>
            <person name="Shinozaki K."/>
            <person name="Davis R.W."/>
            <person name="Theologis A."/>
            <person name="Ecker J.R."/>
        </authorList>
    </citation>
    <scope>NUCLEOTIDE SEQUENCE [LARGE SCALE MRNA] (ISOFORM 2)</scope>
    <source>
        <strain>cv. Columbia</strain>
    </source>
</reference>
<reference key="6">
    <citation type="journal article" date="2000" name="Biochimie">
        <title>The role of sigma factors in plastid transcription.</title>
        <authorList>
            <person name="Allison L.A."/>
        </authorList>
    </citation>
    <scope>TISSUE SPECIFICITY</scope>
    <scope>INDUCTION BY LIGHT</scope>
    <scope>GENE FAMILY</scope>
    <scope>NOMENCLATURE</scope>
    <source>
        <strain>cv. Columbia</strain>
        <tissue>Seedling hypocotyl</tissue>
    </source>
</reference>
<reference key="7">
    <citation type="journal article" date="2002" name="FEBS Lett.">
        <title>Blue light specific and differential expression of a plastid sigma factor, Sig5 in Arabidopsis thaliana.</title>
        <authorList>
            <person name="Tsunoyama Y."/>
            <person name="Morikawa K."/>
            <person name="Shiina T."/>
            <person name="Toyoshima Y."/>
        </authorList>
    </citation>
    <scope>INDUCTION BY LIGHT</scope>
    <source>
        <strain>cv. Columbia</strain>
    </source>
</reference>
<reference key="8">
    <citation type="journal article" date="2005" name="Nucleic Acids Res.">
        <title>Specific function of a plastid sigma factor for ndhF gene transcription.</title>
        <authorList>
            <person name="Favory J.-J."/>
            <person name="Kobayshi M."/>
            <person name="Tanaka K."/>
            <person name="Peltier G."/>
            <person name="Kreis M."/>
            <person name="Valay J.-G."/>
            <person name="Lerbs-Mache S."/>
        </authorList>
    </citation>
    <scope>FUNCTION</scope>
    <scope>DISRUPTION PHENOTYPE</scope>
    <source>
        <strain>cv. Columbia</strain>
        <strain>cv. Wassilewskija</strain>
    </source>
</reference>
<reference key="9">
    <citation type="journal article" date="2005" name="Plant J.">
        <title>A nuclear-encoded sigma factor, Arabidopsis SIG6, recognizes sigma-70 type chloroplast promoters and regulates early chloroplast development in cotyledons.</title>
        <authorList>
            <person name="Ishizaki Y."/>
            <person name="Tsunoyama Y."/>
            <person name="Hatano K."/>
            <person name="Ando K."/>
            <person name="Kato K."/>
            <person name="Shinmyo A."/>
            <person name="Kobori M."/>
            <person name="Takeba G."/>
            <person name="Nakahira Y."/>
            <person name="Shiina T."/>
        </authorList>
    </citation>
    <scope>TISSUE SPECIFICITY</scope>
    <source>
        <strain>cv. Columbia</strain>
    </source>
</reference>
<reference key="10">
    <citation type="journal article" date="2008" name="Plant J.">
        <title>Light induction of Arabidopsis SIG1 and SIG5 transcripts in mature leaves: differential roles of cryptochrome 1 and cryptochrome 2 and dual function of SIG5 in the recognition of plastid promoters.</title>
        <authorList>
            <person name="Onda Y."/>
            <person name="Yagi Y."/>
            <person name="Saito Y."/>
            <person name="Takenaka N."/>
            <person name="Toyoshima Y."/>
        </authorList>
    </citation>
    <scope>INDUCTION BY LIGHT</scope>
</reference>
<comment type="function">
    <text evidence="6">Sigma factors are initiation factors that promote the attachment of plastid-encoded RNA polymerase (PEP) to specific initiation sites and are then released. Regulates transcription of the ndhF gene which codes for a subunit of the plastid NDH [NAD(P)H dehydrogenase] complex.</text>
</comment>
<comment type="subcellular location">
    <subcellularLocation>
        <location evidence="1">Plastid</location>
        <location evidence="1">Chloroplast</location>
    </subcellularLocation>
</comment>
<comment type="alternative products">
    <event type="alternative splicing"/>
    <isoform>
        <id>Q9ZSL6-1</id>
        <name>1</name>
        <sequence type="displayed"/>
    </isoform>
    <isoform>
        <id>Q9ZSL6-2</id>
        <name>2</name>
        <sequence type="described" ref="VSP_043970 VSP_043971"/>
    </isoform>
</comment>
<comment type="tissue specificity">
    <text evidence="3 5 8">Mostly expressed in leaves, and to a lesser extent in roots. Present in seedlings.</text>
</comment>
<comment type="induction">
    <text evidence="3 4 7 8">Slightly induced by blue light, especially after dark adaptation.</text>
</comment>
<comment type="disruption phenotype">
    <text evidence="6">Reduced transcription of the plastid ndhF gene.</text>
</comment>
<comment type="similarity">
    <text evidence="10">Belongs to the sigma-70 factor family.</text>
</comment>
<evidence type="ECO:0000250" key="1"/>
<evidence type="ECO:0000255" key="2"/>
<evidence type="ECO:0000269" key="3">
    <source>
    </source>
</evidence>
<evidence type="ECO:0000269" key="4">
    <source>
    </source>
</evidence>
<evidence type="ECO:0000269" key="5">
    <source>
    </source>
</evidence>
<evidence type="ECO:0000269" key="6">
    <source>
    </source>
</evidence>
<evidence type="ECO:0000269" key="7">
    <source>
    </source>
</evidence>
<evidence type="ECO:0000269" key="8">
    <source ref="1"/>
</evidence>
<evidence type="ECO:0000303" key="9">
    <source>
    </source>
</evidence>
<evidence type="ECO:0000305" key="10"/>
<dbReference type="EMBL" id="AF101075">
    <property type="protein sequence ID" value="AAC97954.1"/>
    <property type="molecule type" value="mRNA"/>
</dbReference>
<dbReference type="EMBL" id="AB021119">
    <property type="protein sequence ID" value="BAA78110.1"/>
    <property type="molecule type" value="Genomic_DNA"/>
</dbReference>
<dbReference type="EMBL" id="AB021119">
    <property type="protein sequence ID" value="BAA78111.1"/>
    <property type="molecule type" value="Genomic_DNA"/>
</dbReference>
<dbReference type="EMBL" id="AB006704">
    <property type="protein sequence ID" value="BAB08700.1"/>
    <property type="molecule type" value="Genomic_DNA"/>
</dbReference>
<dbReference type="EMBL" id="CP002688">
    <property type="protein sequence ID" value="AED91933.1"/>
    <property type="molecule type" value="Genomic_DNA"/>
</dbReference>
<dbReference type="EMBL" id="AY059907">
    <property type="protein sequence ID" value="AAL24389.1"/>
    <property type="molecule type" value="mRNA"/>
</dbReference>
<dbReference type="EMBL" id="AY114689">
    <property type="protein sequence ID" value="AAM48008.1"/>
    <property type="molecule type" value="mRNA"/>
</dbReference>
<dbReference type="PIR" id="T51715">
    <property type="entry name" value="T51715"/>
</dbReference>
<dbReference type="RefSeq" id="NP_196877.1">
    <molecule id="Q9ZSL6-1"/>
    <property type="nucleotide sequence ID" value="NM_121376.4"/>
</dbReference>
<dbReference type="SMR" id="Q9ZSL6"/>
<dbReference type="BioGRID" id="16496">
    <property type="interactions" value="1"/>
</dbReference>
<dbReference type="FunCoup" id="Q9ZSL6">
    <property type="interactions" value="597"/>
</dbReference>
<dbReference type="IntAct" id="Q9ZSL6">
    <property type="interactions" value="1"/>
</dbReference>
<dbReference type="STRING" id="3702.Q9ZSL6"/>
<dbReference type="PaxDb" id="3702-AT5G13730.1"/>
<dbReference type="EnsemblPlants" id="AT5G13730.1">
    <molecule id="Q9ZSL6-1"/>
    <property type="protein sequence ID" value="AT5G13730.1"/>
    <property type="gene ID" value="AT5G13730"/>
</dbReference>
<dbReference type="GeneID" id="831218"/>
<dbReference type="Gramene" id="AT5G13730.1">
    <molecule id="Q9ZSL6-1"/>
    <property type="protein sequence ID" value="AT5G13730.1"/>
    <property type="gene ID" value="AT5G13730"/>
</dbReference>
<dbReference type="KEGG" id="ath:AT5G13730"/>
<dbReference type="Araport" id="AT5G13730"/>
<dbReference type="TAIR" id="AT5G13730">
    <property type="gene designation" value="SIG4"/>
</dbReference>
<dbReference type="eggNOG" id="ENOG502QPRS">
    <property type="taxonomic scope" value="Eukaryota"/>
</dbReference>
<dbReference type="HOGENOM" id="CLU_014793_3_4_1"/>
<dbReference type="InParanoid" id="Q9ZSL6"/>
<dbReference type="OMA" id="AFFKEMA"/>
<dbReference type="OrthoDB" id="206108at2759"/>
<dbReference type="PhylomeDB" id="Q9ZSL6"/>
<dbReference type="PRO" id="PR:Q9ZSL6"/>
<dbReference type="Proteomes" id="UP000006548">
    <property type="component" value="Chromosome 5"/>
</dbReference>
<dbReference type="ExpressionAtlas" id="Q9ZSL6">
    <property type="expression patterns" value="baseline and differential"/>
</dbReference>
<dbReference type="GO" id="GO:0009507">
    <property type="term" value="C:chloroplast"/>
    <property type="evidence" value="ECO:0000250"/>
    <property type="project" value="UniProtKB"/>
</dbReference>
<dbReference type="GO" id="GO:0003677">
    <property type="term" value="F:DNA binding"/>
    <property type="evidence" value="ECO:0007669"/>
    <property type="project" value="UniProtKB-KW"/>
</dbReference>
<dbReference type="GO" id="GO:0016987">
    <property type="term" value="F:sigma factor activity"/>
    <property type="evidence" value="ECO:0000315"/>
    <property type="project" value="UniProtKB"/>
</dbReference>
<dbReference type="GO" id="GO:0071482">
    <property type="term" value="P:cellular response to light stimulus"/>
    <property type="evidence" value="ECO:0000270"/>
    <property type="project" value="UniProtKB"/>
</dbReference>
<dbReference type="GO" id="GO:0006352">
    <property type="term" value="P:DNA-templated transcription initiation"/>
    <property type="evidence" value="ECO:0000250"/>
    <property type="project" value="UniProtKB"/>
</dbReference>
<dbReference type="GO" id="GO:2001141">
    <property type="term" value="P:regulation of RNA biosynthetic process"/>
    <property type="evidence" value="ECO:0000315"/>
    <property type="project" value="UniProtKB"/>
</dbReference>
<dbReference type="CDD" id="cd06171">
    <property type="entry name" value="Sigma70_r4"/>
    <property type="match status" value="1"/>
</dbReference>
<dbReference type="FunFam" id="1.20.120.1810:FF:000010">
    <property type="match status" value="1"/>
</dbReference>
<dbReference type="Gene3D" id="1.20.120.1810">
    <property type="match status" value="1"/>
</dbReference>
<dbReference type="Gene3D" id="1.10.10.10">
    <property type="entry name" value="Winged helix-like DNA-binding domain superfamily/Winged helix DNA-binding domain"/>
    <property type="match status" value="2"/>
</dbReference>
<dbReference type="InterPro" id="IPR014284">
    <property type="entry name" value="RNA_pol_sigma-70_dom"/>
</dbReference>
<dbReference type="InterPro" id="IPR000943">
    <property type="entry name" value="RNA_pol_sigma70"/>
</dbReference>
<dbReference type="InterPro" id="IPR007627">
    <property type="entry name" value="RNA_pol_sigma70_r2"/>
</dbReference>
<dbReference type="InterPro" id="IPR007624">
    <property type="entry name" value="RNA_pol_sigma70_r3"/>
</dbReference>
<dbReference type="InterPro" id="IPR007630">
    <property type="entry name" value="RNA_pol_sigma70_r4"/>
</dbReference>
<dbReference type="InterPro" id="IPR013325">
    <property type="entry name" value="RNA_pol_sigma_r2"/>
</dbReference>
<dbReference type="InterPro" id="IPR013324">
    <property type="entry name" value="RNA_pol_sigma_r3/r4-like"/>
</dbReference>
<dbReference type="InterPro" id="IPR016262">
    <property type="entry name" value="RNA_pol_sigma_SigB/C/D/F"/>
</dbReference>
<dbReference type="InterPro" id="IPR050239">
    <property type="entry name" value="Sigma-70_RNA_pol_init_factors"/>
</dbReference>
<dbReference type="InterPro" id="IPR036388">
    <property type="entry name" value="WH-like_DNA-bd_sf"/>
</dbReference>
<dbReference type="NCBIfam" id="TIGR02937">
    <property type="entry name" value="sigma70-ECF"/>
    <property type="match status" value="1"/>
</dbReference>
<dbReference type="PANTHER" id="PTHR30603">
    <property type="entry name" value="RNA POLYMERASE SIGMA FACTOR RPO"/>
    <property type="match status" value="1"/>
</dbReference>
<dbReference type="PANTHER" id="PTHR30603:SF47">
    <property type="entry name" value="RNA POLYMERASE SIGMA FACTOR SIGD, CHLOROPLASTIC"/>
    <property type="match status" value="1"/>
</dbReference>
<dbReference type="Pfam" id="PF04542">
    <property type="entry name" value="Sigma70_r2"/>
    <property type="match status" value="1"/>
</dbReference>
<dbReference type="Pfam" id="PF04539">
    <property type="entry name" value="Sigma70_r3"/>
    <property type="match status" value="1"/>
</dbReference>
<dbReference type="Pfam" id="PF04545">
    <property type="entry name" value="Sigma70_r4"/>
    <property type="match status" value="1"/>
</dbReference>
<dbReference type="PIRSF" id="PIRSF000767">
    <property type="entry name" value="RNA_pol_sigma_SigB/C/D"/>
    <property type="match status" value="1"/>
</dbReference>
<dbReference type="PRINTS" id="PR00046">
    <property type="entry name" value="SIGMA70FCT"/>
</dbReference>
<dbReference type="SUPFAM" id="SSF88946">
    <property type="entry name" value="Sigma2 domain of RNA polymerase sigma factors"/>
    <property type="match status" value="1"/>
</dbReference>
<dbReference type="SUPFAM" id="SSF88659">
    <property type="entry name" value="Sigma3 and sigma4 domains of RNA polymerase sigma factors"/>
    <property type="match status" value="2"/>
</dbReference>
<dbReference type="PROSITE" id="PS00715">
    <property type="entry name" value="SIGMA70_1"/>
    <property type="match status" value="1"/>
</dbReference>
<accession>Q9ZSL6</accession>
<accession>Q9SXP8</accession>
<keyword id="KW-0025">Alternative splicing</keyword>
<keyword id="KW-0150">Chloroplast</keyword>
<keyword id="KW-0238">DNA-binding</keyword>
<keyword id="KW-0934">Plastid</keyword>
<keyword id="KW-1185">Reference proteome</keyword>
<keyword id="KW-0731">Sigma factor</keyword>
<keyword id="KW-0804">Transcription</keyword>
<keyword id="KW-0805">Transcription regulation</keyword>
<keyword id="KW-0809">Transit peptide</keyword>
<feature type="transit peptide" description="Chloroplast" evidence="2">
    <location>
        <begin position="1"/>
        <end position="52"/>
    </location>
</feature>
<feature type="chain" id="PRO_0000418096" description="RNA polymerase sigma factor sigD, chloroplastic">
    <location>
        <begin position="53"/>
        <end position="419"/>
    </location>
</feature>
<feature type="DNA-binding region" description="H-T-H motif" evidence="1">
    <location>
        <begin position="377"/>
        <end position="396"/>
    </location>
</feature>
<feature type="short sequence motif" description="Polymerase core binding">
    <location>
        <begin position="207"/>
        <end position="220"/>
    </location>
</feature>
<feature type="splice variant" id="VSP_043970" description="In isoform 2." evidence="9">
    <original>GSMWELTAKV</original>
    <variation>LVVCREACGS</variation>
    <location>
        <begin position="258"/>
        <end position="267"/>
    </location>
</feature>
<feature type="splice variant" id="VSP_043971" description="In isoform 2." evidence="9">
    <location>
        <begin position="268"/>
        <end position="419"/>
    </location>
</feature>
<sequence>MATTIPTTATATMCPSPPVPTISPLLRTTHQCQPSPSLSSPFSIKLSTALVCGDTTVDRVVDSSVMIKPEKWGIQSEKRRKRRRRRRVGYERLEPEEEENAGVEAEAETISVPVVGASRSGFLSRLEEVQLCLYLKEGAKLENLGTSVEENEMVSVLLASGRGKKKRSANEILCRRKEAREKITRCYRRLVVSIATGYQGKGLNLQDLIQEGSIGLLRGAERFDPDRGYKLSTYVYWWIKQAILRAIAHKSRLVKLPGSMWELTAKVAEASNVLTRKLRRQPSCEEIAEHLNLNVSAVRLAVERSRSPVSLDRVASQNGRMTLQEIVRGPDETRPEEMVKREHMKHEIEQLLGSLTARESRVLGLYFGLNGETPMSFEEIGKSLKLSRERVRQINGIALKKLRNVHNVNDLKIYYSSSE</sequence>
<proteinExistence type="evidence at transcript level"/>
<protein>
    <recommendedName>
        <fullName>RNA polymerase sigma factor sigD, chloroplastic</fullName>
        <shortName>Sigma factor D</shortName>
        <shortName>Sigma-D</shortName>
    </recommendedName>
    <alternativeName>
        <fullName>RNA polymerase sigma factor sig4</fullName>
        <shortName>Atsig4</shortName>
        <shortName>Sigma factor 4</shortName>
    </alternativeName>
</protein>
<gene>
    <name type="primary">SIGD</name>
    <name type="synonym">SIG4</name>
    <name type="ordered locus">At5g13730</name>
    <name type="ORF">MSH12.20</name>
</gene>